<gene>
    <name type="primary">MDV1</name>
    <name type="ORF">UMAG_03498</name>
</gene>
<sequence length="814" mass="87992">MSYSPLLGADRRAGEPSSGLASSTSIRDTLSGALNSTKAYLQPFTPASPYLGSNGVNGHNEPSRLLSDVAPQLMTTRMMAAVTNSNTALGLTPDGQRRARLLLTPGFSITSPARSLVRIGGSLIQSGIGRGPMNGITSNELFVLEESDRILATAARDLDLEANADAQLGARSAIEASKSKAAEPSVSLLRGFQATIPSSTEGRQRRRRVRALASGFEDGPEGPTKLGLKAMGDKARGLMVEGVDAEPVSAFQAREQRHARRNQASRILSRAKEGSRSSAIQLEELERQLREIEREQGDVGVRRSLIDSEMAAVDDKIKVLENIKAGLHKKLLGLREEELELNDEHEGVGELLAVQKHLRAMPGGPAAAANAAASGGATTSQGSSRRRKGPLFMPSEHDELPSGVAFMTLADHSAPITSLDFTEPYGTLVSASLDETVRVWDLASGEEVGRLRGHVGTVKCLQVEDEVCITGGSDHSIRIWDLTKVENFEARLTMTASGELRARRRSPDLNRSPPPVADESMDSIKIRDGDTTAGDGDEEEVRDEFDPCVKRLEGHSKSVTSLYFDDNCLVTGASDKTLRQWDLNTGQCVLTMDILWAISNPTSSQAISQSEFGFPESPSRKASSSSILGATRPDLSSRDSFSVLNNLSGAFSYPTPPYADGSWEMYQDFVGGVQFWGYALASGSGDGGVRMWDMRTGQAHRTLLGHTAPVTCLQFDEHHIISGSLDKSIRIWDLRMGSISDTVRYEHPVTALQFDSRKILAATGENGVKLFNRTTLQHGSLTLNGHTSPVERLRYMDRYAVSGGKDCVVKIWAL</sequence>
<keyword id="KW-0175">Coiled coil</keyword>
<keyword id="KW-0472">Membrane</keyword>
<keyword id="KW-0496">Mitochondrion</keyword>
<keyword id="KW-1000">Mitochondrion outer membrane</keyword>
<keyword id="KW-1185">Reference proteome</keyword>
<keyword id="KW-0677">Repeat</keyword>
<keyword id="KW-0853">WD repeat</keyword>
<name>MDV1_MYCMD</name>
<feature type="chain" id="PRO_0000330112" description="Mitochondrial division protein 1">
    <location>
        <begin position="1"/>
        <end position="814"/>
    </location>
</feature>
<feature type="repeat" description="WD 1">
    <location>
        <begin position="411"/>
        <end position="450"/>
    </location>
</feature>
<feature type="repeat" description="WD 2">
    <location>
        <begin position="453"/>
        <end position="490"/>
    </location>
</feature>
<feature type="repeat" description="WD 3">
    <location>
        <begin position="554"/>
        <end position="591"/>
    </location>
</feature>
<feature type="repeat" description="WD 4">
    <location>
        <begin position="659"/>
        <end position="702"/>
    </location>
</feature>
<feature type="repeat" description="WD 5">
    <location>
        <begin position="705"/>
        <end position="742"/>
    </location>
</feature>
<feature type="repeat" description="WD 6">
    <location>
        <begin position="744"/>
        <end position="781"/>
    </location>
</feature>
<feature type="repeat" description="WD 7">
    <location>
        <begin position="785"/>
        <end position="814"/>
    </location>
</feature>
<feature type="region of interest" description="Disordered" evidence="3">
    <location>
        <begin position="1"/>
        <end position="24"/>
    </location>
</feature>
<feature type="region of interest" description="Disordered" evidence="3">
    <location>
        <begin position="365"/>
        <end position="394"/>
    </location>
</feature>
<feature type="region of interest" description="Disordered" evidence="3">
    <location>
        <begin position="499"/>
        <end position="542"/>
    </location>
</feature>
<feature type="region of interest" description="Disordered" evidence="3">
    <location>
        <begin position="608"/>
        <end position="631"/>
    </location>
</feature>
<feature type="coiled-coil region" evidence="2">
    <location>
        <begin position="270"/>
        <end position="303"/>
    </location>
</feature>
<feature type="compositionally biased region" description="Low complexity" evidence="3">
    <location>
        <begin position="365"/>
        <end position="383"/>
    </location>
</feature>
<organism>
    <name type="scientific">Mycosarcoma maydis</name>
    <name type="common">Corn smut fungus</name>
    <name type="synonym">Ustilago maydis</name>
    <dbReference type="NCBI Taxonomy" id="5270"/>
    <lineage>
        <taxon>Eukaryota</taxon>
        <taxon>Fungi</taxon>
        <taxon>Dikarya</taxon>
        <taxon>Basidiomycota</taxon>
        <taxon>Ustilaginomycotina</taxon>
        <taxon>Ustilaginomycetes</taxon>
        <taxon>Ustilaginales</taxon>
        <taxon>Ustilaginaceae</taxon>
        <taxon>Mycosarcoma</taxon>
    </lineage>
</organism>
<dbReference type="EMBL" id="CM003148">
    <property type="protein sequence ID" value="KIS68407.1"/>
    <property type="molecule type" value="Genomic_DNA"/>
</dbReference>
<dbReference type="RefSeq" id="XP_011389947.1">
    <property type="nucleotide sequence ID" value="XM_011391645.1"/>
</dbReference>
<dbReference type="SMR" id="Q4P8R5"/>
<dbReference type="STRING" id="237631.Q4P8R5"/>
<dbReference type="EnsemblFungi" id="KIS68407">
    <property type="protein sequence ID" value="KIS68407"/>
    <property type="gene ID" value="UMAG_03498"/>
</dbReference>
<dbReference type="GeneID" id="23563934"/>
<dbReference type="KEGG" id="uma:UMAG_03498"/>
<dbReference type="VEuPathDB" id="FungiDB:UMAG_03498"/>
<dbReference type="eggNOG" id="KOG4155">
    <property type="taxonomic scope" value="Eukaryota"/>
</dbReference>
<dbReference type="HOGENOM" id="CLU_012350_0_0_1"/>
<dbReference type="InParanoid" id="Q4P8R5"/>
<dbReference type="OMA" id="ERLRYMD"/>
<dbReference type="OrthoDB" id="496at2759"/>
<dbReference type="Proteomes" id="UP000000561">
    <property type="component" value="Chromosome 9"/>
</dbReference>
<dbReference type="GO" id="GO:0005741">
    <property type="term" value="C:mitochondrial outer membrane"/>
    <property type="evidence" value="ECO:0007669"/>
    <property type="project" value="UniProtKB-SubCell"/>
</dbReference>
<dbReference type="GO" id="GO:0005634">
    <property type="term" value="C:nucleus"/>
    <property type="evidence" value="ECO:0000318"/>
    <property type="project" value="GO_Central"/>
</dbReference>
<dbReference type="CDD" id="cd00200">
    <property type="entry name" value="WD40"/>
    <property type="match status" value="1"/>
</dbReference>
<dbReference type="FunFam" id="2.130.10.10:FF:000838">
    <property type="entry name" value="Mitochondrial division protein 1"/>
    <property type="match status" value="1"/>
</dbReference>
<dbReference type="FunFam" id="2.130.10.10:FF:000840">
    <property type="entry name" value="Related to CAF4-CCR4 associated factor"/>
    <property type="match status" value="1"/>
</dbReference>
<dbReference type="FunFam" id="2.130.10.10:FF:001850">
    <property type="entry name" value="Trp-asp repeats containing protein"/>
    <property type="match status" value="1"/>
</dbReference>
<dbReference type="Gene3D" id="6.10.280.220">
    <property type="match status" value="1"/>
</dbReference>
<dbReference type="Gene3D" id="2.130.10.10">
    <property type="entry name" value="YVTN repeat-like/Quinoprotein amine dehydrogenase"/>
    <property type="match status" value="3"/>
</dbReference>
<dbReference type="InterPro" id="IPR020472">
    <property type="entry name" value="G-protein_beta_WD-40_rep"/>
</dbReference>
<dbReference type="InterPro" id="IPR015943">
    <property type="entry name" value="WD40/YVTN_repeat-like_dom_sf"/>
</dbReference>
<dbReference type="InterPro" id="IPR019775">
    <property type="entry name" value="WD40_repeat_CS"/>
</dbReference>
<dbReference type="InterPro" id="IPR036322">
    <property type="entry name" value="WD40_repeat_dom_sf"/>
</dbReference>
<dbReference type="InterPro" id="IPR001680">
    <property type="entry name" value="WD40_rpt"/>
</dbReference>
<dbReference type="PANTHER" id="PTHR19855:SF28">
    <property type="entry name" value="CCR4-ASSOCIATED FACTOR 4"/>
    <property type="match status" value="1"/>
</dbReference>
<dbReference type="PANTHER" id="PTHR19855">
    <property type="entry name" value="WD40 REPEAT PROTEIN 12, 37"/>
    <property type="match status" value="1"/>
</dbReference>
<dbReference type="Pfam" id="PF00400">
    <property type="entry name" value="WD40"/>
    <property type="match status" value="5"/>
</dbReference>
<dbReference type="PRINTS" id="PR00320">
    <property type="entry name" value="GPROTEINBRPT"/>
</dbReference>
<dbReference type="SMART" id="SM00320">
    <property type="entry name" value="WD40"/>
    <property type="match status" value="7"/>
</dbReference>
<dbReference type="SUPFAM" id="SSF50978">
    <property type="entry name" value="WD40 repeat-like"/>
    <property type="match status" value="1"/>
</dbReference>
<dbReference type="PROSITE" id="PS00678">
    <property type="entry name" value="WD_REPEATS_1"/>
    <property type="match status" value="4"/>
</dbReference>
<dbReference type="PROSITE" id="PS50082">
    <property type="entry name" value="WD_REPEATS_2"/>
    <property type="match status" value="6"/>
</dbReference>
<dbReference type="PROSITE" id="PS50294">
    <property type="entry name" value="WD_REPEATS_REGION"/>
    <property type="match status" value="1"/>
</dbReference>
<accession>Q4P8R5</accession>
<accession>A0A0D1C3W8</accession>
<comment type="function">
    <text evidence="1">Involved in mitochondrial fission. Acts as an adapter protein required to form mitochondrial fission complexes. Formation of these complexes is required to promote constriction and fission of the mitochondrial compartment at a late step in mitochondrial division (By similarity).</text>
</comment>
<comment type="subcellular location">
    <subcellularLocation>
        <location evidence="1">Mitochondrion outer membrane</location>
        <topology evidence="1">Peripheral membrane protein</topology>
        <orientation evidence="1">Cytoplasmic side</orientation>
    </subcellularLocation>
</comment>
<comment type="similarity">
    <text evidence="4">Belongs to the WD repeat MDV1/CAF4 family.</text>
</comment>
<protein>
    <recommendedName>
        <fullName>Mitochondrial division protein 1</fullName>
    </recommendedName>
</protein>
<evidence type="ECO:0000250" key="1"/>
<evidence type="ECO:0000255" key="2"/>
<evidence type="ECO:0000256" key="3">
    <source>
        <dbReference type="SAM" id="MobiDB-lite"/>
    </source>
</evidence>
<evidence type="ECO:0000305" key="4"/>
<proteinExistence type="inferred from homology"/>
<reference key="1">
    <citation type="journal article" date="2006" name="Nature">
        <title>Insights from the genome of the biotrophic fungal plant pathogen Ustilago maydis.</title>
        <authorList>
            <person name="Kaemper J."/>
            <person name="Kahmann R."/>
            <person name="Boelker M."/>
            <person name="Ma L.-J."/>
            <person name="Brefort T."/>
            <person name="Saville B.J."/>
            <person name="Banuett F."/>
            <person name="Kronstad J.W."/>
            <person name="Gold S.E."/>
            <person name="Mueller O."/>
            <person name="Perlin M.H."/>
            <person name="Woesten H.A.B."/>
            <person name="de Vries R."/>
            <person name="Ruiz-Herrera J."/>
            <person name="Reynaga-Pena C.G."/>
            <person name="Snetselaar K."/>
            <person name="McCann M."/>
            <person name="Perez-Martin J."/>
            <person name="Feldbruegge M."/>
            <person name="Basse C.W."/>
            <person name="Steinberg G."/>
            <person name="Ibeas J.I."/>
            <person name="Holloman W."/>
            <person name="Guzman P."/>
            <person name="Farman M.L."/>
            <person name="Stajich J.E."/>
            <person name="Sentandreu R."/>
            <person name="Gonzalez-Prieto J.M."/>
            <person name="Kennell J.C."/>
            <person name="Molina L."/>
            <person name="Schirawski J."/>
            <person name="Mendoza-Mendoza A."/>
            <person name="Greilinger D."/>
            <person name="Muench K."/>
            <person name="Roessel N."/>
            <person name="Scherer M."/>
            <person name="Vranes M."/>
            <person name="Ladendorf O."/>
            <person name="Vincon V."/>
            <person name="Fuchs U."/>
            <person name="Sandrock B."/>
            <person name="Meng S."/>
            <person name="Ho E.C.H."/>
            <person name="Cahill M.J."/>
            <person name="Boyce K.J."/>
            <person name="Klose J."/>
            <person name="Klosterman S.J."/>
            <person name="Deelstra H.J."/>
            <person name="Ortiz-Castellanos L."/>
            <person name="Li W."/>
            <person name="Sanchez-Alonso P."/>
            <person name="Schreier P.H."/>
            <person name="Haeuser-Hahn I."/>
            <person name="Vaupel M."/>
            <person name="Koopmann E."/>
            <person name="Friedrich G."/>
            <person name="Voss H."/>
            <person name="Schlueter T."/>
            <person name="Margolis J."/>
            <person name="Platt D."/>
            <person name="Swimmer C."/>
            <person name="Gnirke A."/>
            <person name="Chen F."/>
            <person name="Vysotskaia V."/>
            <person name="Mannhaupt G."/>
            <person name="Gueldener U."/>
            <person name="Muensterkoetter M."/>
            <person name="Haase D."/>
            <person name="Oesterheld M."/>
            <person name="Mewes H.-W."/>
            <person name="Mauceli E.W."/>
            <person name="DeCaprio D."/>
            <person name="Wade C.M."/>
            <person name="Butler J."/>
            <person name="Young S.K."/>
            <person name="Jaffe D.B."/>
            <person name="Calvo S.E."/>
            <person name="Nusbaum C."/>
            <person name="Galagan J.E."/>
            <person name="Birren B.W."/>
        </authorList>
    </citation>
    <scope>NUCLEOTIDE SEQUENCE [LARGE SCALE GENOMIC DNA]</scope>
    <source>
        <strain>DSM 14603 / FGSC 9021 / UM521</strain>
    </source>
</reference>
<reference key="2">
    <citation type="submission" date="2014-09" db="EMBL/GenBank/DDBJ databases">
        <authorList>
            <person name="Gueldener U."/>
            <person name="Muensterkoetter M."/>
            <person name="Walter M.C."/>
            <person name="Mannhaupt G."/>
            <person name="Kahmann R."/>
        </authorList>
    </citation>
    <scope>GENOME REANNOTATION</scope>
    <source>
        <strain>DSM 14603 / FGSC 9021 / UM521</strain>
    </source>
</reference>